<reference key="1">
    <citation type="journal article" date="2008" name="DNA Res.">
        <title>Complete genome sequence and comparative analysis of the wild-type commensal Escherichia coli strain SE11 isolated from a healthy adult.</title>
        <authorList>
            <person name="Oshima K."/>
            <person name="Toh H."/>
            <person name="Ogura Y."/>
            <person name="Sasamoto H."/>
            <person name="Morita H."/>
            <person name="Park S.-H."/>
            <person name="Ooka T."/>
            <person name="Iyoda S."/>
            <person name="Taylor T.D."/>
            <person name="Hayashi T."/>
            <person name="Itoh K."/>
            <person name="Hattori M."/>
        </authorList>
    </citation>
    <scope>NUCLEOTIDE SEQUENCE [LARGE SCALE GENOMIC DNA]</scope>
    <source>
        <strain>SE11</strain>
    </source>
</reference>
<protein>
    <recommendedName>
        <fullName evidence="1">NADH-quinone oxidoreductase subunit K</fullName>
        <ecNumber evidence="1">7.1.1.-</ecNumber>
    </recommendedName>
    <alternativeName>
        <fullName evidence="1">NADH dehydrogenase I subunit K</fullName>
    </alternativeName>
    <alternativeName>
        <fullName evidence="1">NDH-1 subunit K</fullName>
    </alternativeName>
</protein>
<evidence type="ECO:0000255" key="1">
    <source>
        <dbReference type="HAMAP-Rule" id="MF_01456"/>
    </source>
</evidence>
<feature type="chain" id="PRO_0000390046" description="NADH-quinone oxidoreductase subunit K">
    <location>
        <begin position="1"/>
        <end position="100"/>
    </location>
</feature>
<feature type="transmembrane region" description="Helical" evidence="1">
    <location>
        <begin position="4"/>
        <end position="24"/>
    </location>
</feature>
<feature type="transmembrane region" description="Helical" evidence="1">
    <location>
        <begin position="28"/>
        <end position="48"/>
    </location>
</feature>
<feature type="transmembrane region" description="Helical" evidence="1">
    <location>
        <begin position="60"/>
        <end position="80"/>
    </location>
</feature>
<name>NUOK_ECOSE</name>
<sequence length="100" mass="10845">MIPLQHGLILAAILFVLGLTGLVIRRNLLFMLIGLEIMINASALAFVVAGSYWGQTDGQVMYILAISLAAAEASIGLALLLQLHRRRQNLNIDSVSEMRG</sequence>
<proteinExistence type="inferred from homology"/>
<organism>
    <name type="scientific">Escherichia coli (strain SE11)</name>
    <dbReference type="NCBI Taxonomy" id="409438"/>
    <lineage>
        <taxon>Bacteria</taxon>
        <taxon>Pseudomonadati</taxon>
        <taxon>Pseudomonadota</taxon>
        <taxon>Gammaproteobacteria</taxon>
        <taxon>Enterobacterales</taxon>
        <taxon>Enterobacteriaceae</taxon>
        <taxon>Escherichia</taxon>
    </lineage>
</organism>
<accession>B6I7M9</accession>
<keyword id="KW-0997">Cell inner membrane</keyword>
<keyword id="KW-1003">Cell membrane</keyword>
<keyword id="KW-0472">Membrane</keyword>
<keyword id="KW-0520">NAD</keyword>
<keyword id="KW-0874">Quinone</keyword>
<keyword id="KW-1278">Translocase</keyword>
<keyword id="KW-0812">Transmembrane</keyword>
<keyword id="KW-1133">Transmembrane helix</keyword>
<keyword id="KW-0813">Transport</keyword>
<keyword id="KW-0830">Ubiquinone</keyword>
<comment type="function">
    <text evidence="1">NDH-1 shuttles electrons from NADH, via FMN and iron-sulfur (Fe-S) centers, to quinones in the respiratory chain. The immediate electron acceptor for the enzyme in this species is believed to be ubiquinone. Couples the redox reaction to proton translocation (for every two electrons transferred, four hydrogen ions are translocated across the cytoplasmic membrane), and thus conserves the redox energy in a proton gradient.</text>
</comment>
<comment type="catalytic activity">
    <reaction evidence="1">
        <text>a quinone + NADH + 5 H(+)(in) = a quinol + NAD(+) + 4 H(+)(out)</text>
        <dbReference type="Rhea" id="RHEA:57888"/>
        <dbReference type="ChEBI" id="CHEBI:15378"/>
        <dbReference type="ChEBI" id="CHEBI:24646"/>
        <dbReference type="ChEBI" id="CHEBI:57540"/>
        <dbReference type="ChEBI" id="CHEBI:57945"/>
        <dbReference type="ChEBI" id="CHEBI:132124"/>
    </reaction>
</comment>
<comment type="subunit">
    <text evidence="1">NDH-1 is composed of 13 different subunits. Subunits NuoA, H, J, K, L, M, N constitute the membrane sector of the complex.</text>
</comment>
<comment type="subcellular location">
    <subcellularLocation>
        <location evidence="1">Cell inner membrane</location>
        <topology evidence="1">Multi-pass membrane protein</topology>
    </subcellularLocation>
</comment>
<comment type="similarity">
    <text evidence="1">Belongs to the complex I subunit 4L family.</text>
</comment>
<dbReference type="EC" id="7.1.1.-" evidence="1"/>
<dbReference type="EMBL" id="AP009240">
    <property type="protein sequence ID" value="BAG78060.1"/>
    <property type="molecule type" value="Genomic_DNA"/>
</dbReference>
<dbReference type="RefSeq" id="WP_000612644.1">
    <property type="nucleotide sequence ID" value="NC_011415.1"/>
</dbReference>
<dbReference type="SMR" id="B6I7M9"/>
<dbReference type="GeneID" id="93033872"/>
<dbReference type="KEGG" id="ecy:ECSE_2536"/>
<dbReference type="HOGENOM" id="CLU_144724_0_1_6"/>
<dbReference type="Proteomes" id="UP000008199">
    <property type="component" value="Chromosome"/>
</dbReference>
<dbReference type="GO" id="GO:0030964">
    <property type="term" value="C:NADH dehydrogenase complex"/>
    <property type="evidence" value="ECO:0007669"/>
    <property type="project" value="TreeGrafter"/>
</dbReference>
<dbReference type="GO" id="GO:0005886">
    <property type="term" value="C:plasma membrane"/>
    <property type="evidence" value="ECO:0007669"/>
    <property type="project" value="UniProtKB-SubCell"/>
</dbReference>
<dbReference type="GO" id="GO:0050136">
    <property type="term" value="F:NADH:ubiquinone reductase (non-electrogenic) activity"/>
    <property type="evidence" value="ECO:0007669"/>
    <property type="project" value="UniProtKB-UniRule"/>
</dbReference>
<dbReference type="GO" id="GO:0048038">
    <property type="term" value="F:quinone binding"/>
    <property type="evidence" value="ECO:0007669"/>
    <property type="project" value="UniProtKB-KW"/>
</dbReference>
<dbReference type="GO" id="GO:0042773">
    <property type="term" value="P:ATP synthesis coupled electron transport"/>
    <property type="evidence" value="ECO:0007669"/>
    <property type="project" value="InterPro"/>
</dbReference>
<dbReference type="FunFam" id="1.10.287.3510:FF:000001">
    <property type="entry name" value="NADH-quinone oxidoreductase subunit K"/>
    <property type="match status" value="1"/>
</dbReference>
<dbReference type="Gene3D" id="1.10.287.3510">
    <property type="match status" value="1"/>
</dbReference>
<dbReference type="HAMAP" id="MF_01456">
    <property type="entry name" value="NDH1_NuoK"/>
    <property type="match status" value="1"/>
</dbReference>
<dbReference type="InterPro" id="IPR001133">
    <property type="entry name" value="NADH_UbQ_OxRdtase_chain4L/K"/>
</dbReference>
<dbReference type="InterPro" id="IPR039428">
    <property type="entry name" value="NUOK/Mnh_C1-like"/>
</dbReference>
<dbReference type="NCBIfam" id="NF004319">
    <property type="entry name" value="PRK05715.1-1"/>
    <property type="match status" value="1"/>
</dbReference>
<dbReference type="NCBIfam" id="NF004320">
    <property type="entry name" value="PRK05715.1-2"/>
    <property type="match status" value="1"/>
</dbReference>
<dbReference type="PANTHER" id="PTHR11434:SF16">
    <property type="entry name" value="NADH-UBIQUINONE OXIDOREDUCTASE CHAIN 4L"/>
    <property type="match status" value="1"/>
</dbReference>
<dbReference type="PANTHER" id="PTHR11434">
    <property type="entry name" value="NADH-UBIQUINONE OXIDOREDUCTASE SUBUNIT ND4L"/>
    <property type="match status" value="1"/>
</dbReference>
<dbReference type="Pfam" id="PF00420">
    <property type="entry name" value="Oxidored_q2"/>
    <property type="match status" value="1"/>
</dbReference>
<gene>
    <name evidence="1" type="primary">nuoK</name>
    <name type="ordered locus">ECSE_2536</name>
</gene>